<comment type="function">
    <text evidence="4 6 9">High-affinity glucose transporter (PubMed:10612724, PubMed:12187386). Acts as a multifunctional complement-evasion molecule that causes down-regulation of complement activation by acquisition of human complement factors FH and C4BP (PubMed:21844307). Also functions as a human immunodeficiency virus (HIV) receptor via binding the viral gp160 protein (PubMed:21844307). Modulates hyphae formation (PubMed:21844307).</text>
</comment>
<comment type="subunit">
    <text evidence="6">Interacts with the human complement factors FH and C4BP (PubMed:21844307). Also binds human immunodeficiency virus (HIV) protein gp160 (PubMed:21844307).</text>
</comment>
<comment type="subcellular location">
    <subcellularLocation>
        <location evidence="8">Cell membrane</location>
        <topology evidence="1">Multi-pass membrane protein</topology>
    </subcellularLocation>
</comment>
<comment type="induction">
    <text evidence="4 5">Expressed in presence of 2 percent glucose (PubMed:12187386). Expression is induced by progesterone and drugs such as cycloheximide, benomyl and chloramphenicol (PubMed:10612724).</text>
</comment>
<comment type="disruption phenotype">
    <text evidence="6">Reduces the binding of human FH and C4Bp as well as of human immunodeficiency virus (HIV) gp160 protein onto C.albicans cell surface (PubMed:21844307). Reduces ability to form hyphae (PubMed:21844307).</text>
</comment>
<comment type="similarity">
    <text evidence="8">Belongs to the major facilitator superfamily. Sugar transporter (TC 2.A.1.1) family.</text>
</comment>
<reference key="1">
    <citation type="journal article" date="2004" name="Proc. Natl. Acad. Sci. U.S.A.">
        <title>The diploid genome sequence of Candida albicans.</title>
        <authorList>
            <person name="Jones T."/>
            <person name="Federspiel N.A."/>
            <person name="Chibana H."/>
            <person name="Dungan J."/>
            <person name="Kalman S."/>
            <person name="Magee B.B."/>
            <person name="Newport G."/>
            <person name="Thorstenson Y.R."/>
            <person name="Agabian N."/>
            <person name="Magee P.T."/>
            <person name="Davis R.W."/>
            <person name="Scherer S."/>
        </authorList>
    </citation>
    <scope>NUCLEOTIDE SEQUENCE [LARGE SCALE GENOMIC DNA]</scope>
    <source>
        <strain>SC5314 / ATCC MYA-2876</strain>
    </source>
</reference>
<reference key="2">
    <citation type="journal article" date="2007" name="Genome Biol.">
        <title>Assembly of the Candida albicans genome into sixteen supercontigs aligned on the eight chromosomes.</title>
        <authorList>
            <person name="van het Hoog M."/>
            <person name="Rast T.J."/>
            <person name="Martchenko M."/>
            <person name="Grindle S."/>
            <person name="Dignard D."/>
            <person name="Hogues H."/>
            <person name="Cuomo C."/>
            <person name="Berriman M."/>
            <person name="Scherer S."/>
            <person name="Magee B.B."/>
            <person name="Whiteway M."/>
            <person name="Chibana H."/>
            <person name="Nantel A."/>
            <person name="Magee P.T."/>
        </authorList>
    </citation>
    <scope>GENOME REANNOTATION</scope>
    <source>
        <strain>SC5314 / ATCC MYA-2876</strain>
    </source>
</reference>
<reference key="3">
    <citation type="journal article" date="2013" name="Genome Biol.">
        <title>Assembly of a phased diploid Candida albicans genome facilitates allele-specific measurements and provides a simple model for repeat and indel structure.</title>
        <authorList>
            <person name="Muzzey D."/>
            <person name="Schwartz K."/>
            <person name="Weissman J.S."/>
            <person name="Sherlock G."/>
        </authorList>
    </citation>
    <scope>NUCLEOTIDE SEQUENCE [LARGE SCALE GENOMIC DNA]</scope>
    <scope>GENOME REANNOTATION</scope>
    <source>
        <strain>SC5314 / ATCC MYA-2876</strain>
    </source>
</reference>
<reference key="4">
    <citation type="journal article" date="2000" name="FEMS Microbiol. Lett.">
        <title>Molecular cloning and functional characterisation of a glucose transporter, CaHGT1, of Candida albicans.</title>
        <authorList>
            <person name="Varma A."/>
            <person name="Singh B.B."/>
            <person name="Karnani N."/>
            <person name="Lichtenberg-Frate H."/>
            <person name="Hofer M."/>
            <person name="Magee B.B."/>
            <person name="Prasad R."/>
        </authorList>
    </citation>
    <scope>FUNCTION</scope>
    <scope>INDUCTION</scope>
</reference>
<reference key="5">
    <citation type="journal article" date="2002" name="J. Mol. Evol.">
        <title>Identification and phylogenetic analysis of a glucose transporter gene family from the human pathogenic yeast Candida albicans.</title>
        <authorList>
            <person name="Fan J."/>
            <person name="Chaturvedi V."/>
            <person name="Shen S.H."/>
        </authorList>
    </citation>
    <scope>FUNCTION</scope>
    <scope>INDUCTION</scope>
</reference>
<reference key="6">
    <citation type="journal article" date="2011" name="J. Infect. Dis.">
        <title>Candida albicans Hgt1p, a multifunctional evasion molecule: complement inhibitor, CR3 analogue, and human immunodeficiency virus-binding molecule.</title>
        <authorList>
            <person name="Lesiak-Markowicz I."/>
            <person name="Vogl G."/>
            <person name="Schwarzmueller T."/>
            <person name="Speth C."/>
            <person name="Lass-Floerl C."/>
            <person name="Dierich M.P."/>
            <person name="Kuchler K."/>
            <person name="Wuerzner R."/>
        </authorList>
    </citation>
    <scope>FUNCTION</scope>
    <scope>DISRUPTION PHENOTYPE</scope>
    <scope>INTERACTION WITH HOST COMPLEMENT FACTORS FH AND C4BP AND HIV GP160</scope>
</reference>
<name>HGT1_CANAL</name>
<keyword id="KW-1003">Cell membrane</keyword>
<keyword id="KW-0325">Glycoprotein</keyword>
<keyword id="KW-0472">Membrane</keyword>
<keyword id="KW-1185">Reference proteome</keyword>
<keyword id="KW-0812">Transmembrane</keyword>
<keyword id="KW-1133">Transmembrane helix</keyword>
<keyword id="KW-0813">Transport</keyword>
<sequence length="545" mass="60670">MSSKIERIFSGPALKINTYLDKLPKIYNVFFIASISTIAGMMFGFDISSMSAFIGAEHYMRYFNSPGSDIQGFITSSMALGSFFGSIASSFVSEPFGRRLSLLTCAFFWMVGAAIQSSVQNRAQLIIGRIISGIGVGFGSAVAPVYGAELAPRKIRGLIGGMFQFFVTLGIMIMFYLSFGLGHINGVASFRIAWGLQIVPGLCLFLGCFFIPESPRWLAKQGQWEAAEEIVAKIQAHGDRENPDVLIEISEIKDQLLLEESSKQIGYATLFTKKYIQRTFTAIFAQIWQQLTGMNVMMYYIVYIFQMAGYSGNSNLVASSIQYVINTCVTVPALYFIDKVGRRPLLIGGATMMMAFQFGLAGILGQYSIPWPDSGNDSVNIRIPEDNKSASKGAIACCYLFVASFAFTWGVGIWVYCAEIWGDNRVAQRGNAISTSANWILNFAIAMYTPTGFKNISWKTYIIYGVFCFAMATHVYFGFPETKGKRLEEIGQMWEERVPAWRSRSWQPTVPIASDAELARKMEVEHEEDKLMNEDSNSESRENQA</sequence>
<proteinExistence type="evidence at protein level"/>
<feature type="chain" id="PRO_0000443417" description="High-affinity glucose transporter 1">
    <location>
        <begin position="1"/>
        <end position="545"/>
    </location>
</feature>
<feature type="transmembrane region" description="Helical" evidence="1">
    <location>
        <begin position="29"/>
        <end position="49"/>
    </location>
</feature>
<feature type="transmembrane region" description="Helical" evidence="1">
    <location>
        <begin position="72"/>
        <end position="92"/>
    </location>
</feature>
<feature type="transmembrane region" description="Helical" evidence="1">
    <location>
        <begin position="100"/>
        <end position="120"/>
    </location>
</feature>
<feature type="transmembrane region" description="Helical" evidence="1">
    <location>
        <begin position="125"/>
        <end position="145"/>
    </location>
</feature>
<feature type="transmembrane region" description="Helical" evidence="1">
    <location>
        <begin position="157"/>
        <end position="177"/>
    </location>
</feature>
<feature type="transmembrane region" description="Helical" evidence="1">
    <location>
        <begin position="192"/>
        <end position="212"/>
    </location>
</feature>
<feature type="transmembrane region" description="Helical" evidence="1">
    <location>
        <begin position="291"/>
        <end position="311"/>
    </location>
</feature>
<feature type="transmembrane region" description="Helical" evidence="1">
    <location>
        <begin position="317"/>
        <end position="337"/>
    </location>
</feature>
<feature type="transmembrane region" description="Helical" evidence="1">
    <location>
        <begin position="345"/>
        <end position="365"/>
    </location>
</feature>
<feature type="transmembrane region" description="Helical" evidence="1">
    <location>
        <begin position="395"/>
        <end position="415"/>
    </location>
</feature>
<feature type="transmembrane region" description="Helical" evidence="1">
    <location>
        <begin position="433"/>
        <end position="453"/>
    </location>
</feature>
<feature type="transmembrane region" description="Helical" evidence="1">
    <location>
        <begin position="460"/>
        <end position="480"/>
    </location>
</feature>
<feature type="region of interest" description="Disordered" evidence="3">
    <location>
        <begin position="524"/>
        <end position="545"/>
    </location>
</feature>
<feature type="glycosylation site" description="N-linked (GlcNAc...) asparagine" evidence="2">
    <location>
        <position position="376"/>
    </location>
</feature>
<feature type="glycosylation site" description="N-linked (GlcNAc...) asparagine" evidence="2">
    <location>
        <position position="387"/>
    </location>
</feature>
<feature type="glycosylation site" description="N-linked (GlcNAc...) asparagine" evidence="2">
    <location>
        <position position="455"/>
    </location>
</feature>
<evidence type="ECO:0000255" key="1"/>
<evidence type="ECO:0000255" key="2">
    <source>
        <dbReference type="PROSITE-ProRule" id="PRU00498"/>
    </source>
</evidence>
<evidence type="ECO:0000256" key="3">
    <source>
        <dbReference type="SAM" id="MobiDB-lite"/>
    </source>
</evidence>
<evidence type="ECO:0000269" key="4">
    <source>
    </source>
</evidence>
<evidence type="ECO:0000269" key="5">
    <source>
    </source>
</evidence>
<evidence type="ECO:0000269" key="6">
    <source>
    </source>
</evidence>
<evidence type="ECO:0000303" key="7">
    <source>
    </source>
</evidence>
<evidence type="ECO:0000305" key="8"/>
<evidence type="ECO:0000305" key="9">
    <source>
    </source>
</evidence>
<gene>
    <name evidence="7" type="primary">HGT1</name>
    <name type="synonym">HGT11</name>
    <name type="ordered locus">CAALFM_C101980WA</name>
    <name type="ORF">orf19.4527</name>
</gene>
<organism>
    <name type="scientific">Candida albicans (strain SC5314 / ATCC MYA-2876)</name>
    <name type="common">Yeast</name>
    <dbReference type="NCBI Taxonomy" id="237561"/>
    <lineage>
        <taxon>Eukaryota</taxon>
        <taxon>Fungi</taxon>
        <taxon>Dikarya</taxon>
        <taxon>Ascomycota</taxon>
        <taxon>Saccharomycotina</taxon>
        <taxon>Pichiomycetes</taxon>
        <taxon>Debaryomycetaceae</taxon>
        <taxon>Candida/Lodderomyces clade</taxon>
        <taxon>Candida</taxon>
    </lineage>
</organism>
<protein>
    <recommendedName>
        <fullName evidence="7">High-affinity glucose transporter 1</fullName>
    </recommendedName>
</protein>
<accession>A0A1D8PCL1</accession>
<dbReference type="EMBL" id="CP017623">
    <property type="protein sequence ID" value="AOW25884.1"/>
    <property type="molecule type" value="Genomic_DNA"/>
</dbReference>
<dbReference type="RefSeq" id="XP_712952.2">
    <property type="nucleotide sequence ID" value="XM_707859.2"/>
</dbReference>
<dbReference type="SMR" id="A0A1D8PCL1"/>
<dbReference type="STRING" id="237561.A0A1D8PCL1"/>
<dbReference type="GlyCosmos" id="A0A1D8PCL1">
    <property type="glycosylation" value="3 sites, No reported glycans"/>
</dbReference>
<dbReference type="EnsemblFungi" id="C1_01980W_A-T">
    <property type="protein sequence ID" value="C1_01980W_A-T-p1"/>
    <property type="gene ID" value="C1_01980W_A"/>
</dbReference>
<dbReference type="GeneID" id="3645420"/>
<dbReference type="KEGG" id="cal:CAALFM_C101980WA"/>
<dbReference type="CGD" id="CAL0000200616">
    <property type="gene designation" value="HGT1"/>
</dbReference>
<dbReference type="VEuPathDB" id="FungiDB:C1_01980W_A"/>
<dbReference type="eggNOG" id="KOG0254">
    <property type="taxonomic scope" value="Eukaryota"/>
</dbReference>
<dbReference type="InParanoid" id="A0A1D8PCL1"/>
<dbReference type="OrthoDB" id="4142200at2759"/>
<dbReference type="Proteomes" id="UP000000559">
    <property type="component" value="Chromosome 1"/>
</dbReference>
<dbReference type="GO" id="GO:1903561">
    <property type="term" value="C:extracellular vesicle"/>
    <property type="evidence" value="ECO:0000314"/>
    <property type="project" value="CGD"/>
</dbReference>
<dbReference type="GO" id="GO:0016020">
    <property type="term" value="C:membrane"/>
    <property type="evidence" value="ECO:0000314"/>
    <property type="project" value="CGD"/>
</dbReference>
<dbReference type="GO" id="GO:0005886">
    <property type="term" value="C:plasma membrane"/>
    <property type="evidence" value="ECO:0000314"/>
    <property type="project" value="CGD"/>
</dbReference>
<dbReference type="GO" id="GO:0005351">
    <property type="term" value="F:carbohydrate:proton symporter activity"/>
    <property type="evidence" value="ECO:0000318"/>
    <property type="project" value="GO_Central"/>
</dbReference>
<dbReference type="GO" id="GO:0055056">
    <property type="term" value="F:D-glucose transmembrane transporter activity"/>
    <property type="evidence" value="ECO:0000316"/>
    <property type="project" value="CGD"/>
</dbReference>
<dbReference type="GO" id="GO:0008643">
    <property type="term" value="P:carbohydrate transport"/>
    <property type="evidence" value="ECO:0000318"/>
    <property type="project" value="GO_Central"/>
</dbReference>
<dbReference type="GO" id="GO:0034605">
    <property type="term" value="P:cellular response to heat"/>
    <property type="evidence" value="ECO:0000315"/>
    <property type="project" value="CGD"/>
</dbReference>
<dbReference type="GO" id="GO:0036244">
    <property type="term" value="P:cellular response to neutral pH"/>
    <property type="evidence" value="ECO:0000315"/>
    <property type="project" value="CGD"/>
</dbReference>
<dbReference type="GO" id="GO:1904659">
    <property type="term" value="P:D-glucose transmembrane transport"/>
    <property type="evidence" value="ECO:0000316"/>
    <property type="project" value="CGD"/>
</dbReference>
<dbReference type="GO" id="GO:0030447">
    <property type="term" value="P:filamentous growth"/>
    <property type="evidence" value="ECO:0000315"/>
    <property type="project" value="CGD"/>
</dbReference>
<dbReference type="GO" id="GO:0036168">
    <property type="term" value="P:filamentous growth of a population of unicellular organisms in response to heat"/>
    <property type="evidence" value="ECO:0000315"/>
    <property type="project" value="CGD"/>
</dbReference>
<dbReference type="GO" id="GO:0036178">
    <property type="term" value="P:filamentous growth of a population of unicellular organisms in response to neutral pH"/>
    <property type="evidence" value="ECO:0000315"/>
    <property type="project" value="CGD"/>
</dbReference>
<dbReference type="GO" id="GO:0045916">
    <property type="term" value="P:negative regulation of complement activation"/>
    <property type="evidence" value="ECO:0000315"/>
    <property type="project" value="CGD"/>
</dbReference>
<dbReference type="GO" id="GO:0052067">
    <property type="term" value="P:symbiont-mediated perturbation of host phagocytosis"/>
    <property type="evidence" value="ECO:0000269"/>
    <property type="project" value="SigSci"/>
</dbReference>
<dbReference type="CDD" id="cd17356">
    <property type="entry name" value="MFS_HXT"/>
    <property type="match status" value="1"/>
</dbReference>
<dbReference type="FunFam" id="1.20.1250.20:FF:000026">
    <property type="entry name" value="MFS quinate transporter QutD"/>
    <property type="match status" value="1"/>
</dbReference>
<dbReference type="Gene3D" id="1.20.1250.20">
    <property type="entry name" value="MFS general substrate transporter like domains"/>
    <property type="match status" value="1"/>
</dbReference>
<dbReference type="InterPro" id="IPR020846">
    <property type="entry name" value="MFS_dom"/>
</dbReference>
<dbReference type="InterPro" id="IPR005828">
    <property type="entry name" value="MFS_sugar_transport-like"/>
</dbReference>
<dbReference type="InterPro" id="IPR050360">
    <property type="entry name" value="MFS_Sugar_Transporters"/>
</dbReference>
<dbReference type="InterPro" id="IPR036259">
    <property type="entry name" value="MFS_trans_sf"/>
</dbReference>
<dbReference type="InterPro" id="IPR003663">
    <property type="entry name" value="Sugar/inositol_transpt"/>
</dbReference>
<dbReference type="InterPro" id="IPR005829">
    <property type="entry name" value="Sugar_transporter_CS"/>
</dbReference>
<dbReference type="NCBIfam" id="TIGR00879">
    <property type="entry name" value="SP"/>
    <property type="match status" value="1"/>
</dbReference>
<dbReference type="PANTHER" id="PTHR48022:SF7">
    <property type="entry name" value="MAJOR FACILITATOR SUPERFAMILY (MFS) PROFILE DOMAIN-CONTAINING PROTEIN-RELATED"/>
    <property type="match status" value="1"/>
</dbReference>
<dbReference type="PANTHER" id="PTHR48022">
    <property type="entry name" value="PLASTIDIC GLUCOSE TRANSPORTER 4"/>
    <property type="match status" value="1"/>
</dbReference>
<dbReference type="Pfam" id="PF00083">
    <property type="entry name" value="Sugar_tr"/>
    <property type="match status" value="1"/>
</dbReference>
<dbReference type="PRINTS" id="PR00171">
    <property type="entry name" value="SUGRTRNSPORT"/>
</dbReference>
<dbReference type="SUPFAM" id="SSF103473">
    <property type="entry name" value="MFS general substrate transporter"/>
    <property type="match status" value="1"/>
</dbReference>
<dbReference type="PROSITE" id="PS50850">
    <property type="entry name" value="MFS"/>
    <property type="match status" value="1"/>
</dbReference>
<dbReference type="PROSITE" id="PS00216">
    <property type="entry name" value="SUGAR_TRANSPORT_1"/>
    <property type="match status" value="2"/>
</dbReference>
<dbReference type="PROSITE" id="PS00217">
    <property type="entry name" value="SUGAR_TRANSPORT_2"/>
    <property type="match status" value="1"/>
</dbReference>